<accession>Q9KLR1</accession>
<gene>
    <name evidence="9" type="ordered locus">VC_A0681</name>
</gene>
<comment type="function">
    <text evidence="4 5 6">Phosphodiesterase (PDE) that catalyzes the hydrolysis of 3'3'-cyclic GMP-AMP (3'3'-cGAMP), leading to linear 5'-pApG (PubMed:25837739, PubMed:30365951). Also displays 5'-nucleotidase activity, further hydrolyzing 5'-pApG to 5'-ApG. Counteracts the function of the 3'3'-cGAMP synthase DncV, and is involved in the modulation of intracellular 3'3'-cGAMP levels. Enhances bacterial chemotaxis and inhibits intestinal colonization in vivo. Thus exerts a crucial role in regulating bacterial infectivity through catalyzing 3'3'-cGAMP degradation. Is specific for 3'3'-cGAMP since it cannot degrade other cGAMP linkage isomers (3'2'-, 2'3'-, and 2'2'-cGAMPs) (PubMed:25837739). Is also able to hydrolyze c-di-GMP but not c-di-AMP (PubMed:25343965, PubMed:25837739).</text>
</comment>
<comment type="catalytic activity">
    <reaction evidence="5 6">
        <text>3',3'-cGAMP + H2O = 5'-pApG-3' + H(+)</text>
        <dbReference type="Rhea" id="RHEA:58800"/>
        <dbReference type="ChEBI" id="CHEBI:15377"/>
        <dbReference type="ChEBI" id="CHEBI:15378"/>
        <dbReference type="ChEBI" id="CHEBI:71501"/>
        <dbReference type="ChEBI" id="CHEBI:142752"/>
    </reaction>
    <physiologicalReaction direction="left-to-right" evidence="8">
        <dbReference type="Rhea" id="RHEA:58801"/>
    </physiologicalReaction>
</comment>
<comment type="catalytic activity">
    <reaction evidence="5">
        <text>5'-pApG-3' + H2O = 5'-ApG-3' + phosphate</text>
        <dbReference type="Rhea" id="RHEA:58804"/>
        <dbReference type="ChEBI" id="CHEBI:15377"/>
        <dbReference type="ChEBI" id="CHEBI:43474"/>
        <dbReference type="ChEBI" id="CHEBI:142752"/>
        <dbReference type="ChEBI" id="CHEBI:142753"/>
    </reaction>
    <physiologicalReaction direction="left-to-right" evidence="8">
        <dbReference type="Rhea" id="RHEA:58805"/>
    </physiologicalReaction>
</comment>
<comment type="cofactor">
    <cofactor evidence="6">
        <name>Ca(2+)</name>
        <dbReference type="ChEBI" id="CHEBI:29108"/>
    </cofactor>
    <cofactor evidence="6">
        <name>Mg(2+)</name>
        <dbReference type="ChEBI" id="CHEBI:18420"/>
    </cofactor>
    <text evidence="6">Requires a divalent metal cation for activity. Likely has a bi-nuclear metal center. Has the highest enzyme activity with Ca(2+), followed by Mg(2+).</text>
</comment>
<comment type="biophysicochemical properties">
    <phDependence>
        <text evidence="6">Optimum pH is 8.5-10.5.</text>
    </phDependence>
</comment>
<comment type="subunit">
    <text evidence="6">Monomer.</text>
</comment>
<comment type="induction">
    <text evidence="4 5">Expression is up-regulated by 3'3'-cGAMP production (at both mRNA and protein levels) (PubMed:25837739). Transcripts are more abundant in biofilm cells than in planktonic cells (PubMed:25343965).</text>
</comment>
<comment type="disruption phenotype">
    <text evidence="5">Significant increase in the ability to colonize the small intestine compared to the wild-type strain. No defect in biofilm formation. Enforced DncV expression in mutant cells lacking this gene causes an enhanced inhibition of chemotaxis. The double mutants lacking both VC_A0681 and VC_A0210 or both VC_A0681 and VC_A0931 show enhanced bacterial infectivity, and the triple one (VC_A0681, VC_A0210 and VC_A0931) has the highest infectivity, which demonstrates that V-cGAPs play non-redundant roles in cGAMP degradation.</text>
</comment>
<organism>
    <name type="scientific">Vibrio cholerae serotype O1 (strain ATCC 39315 / El Tor Inaba N16961)</name>
    <dbReference type="NCBI Taxonomy" id="243277"/>
    <lineage>
        <taxon>Bacteria</taxon>
        <taxon>Pseudomonadati</taxon>
        <taxon>Pseudomonadota</taxon>
        <taxon>Gammaproteobacteria</taxon>
        <taxon>Vibrionales</taxon>
        <taxon>Vibrionaceae</taxon>
        <taxon>Vibrio</taxon>
    </lineage>
</organism>
<feature type="chain" id="PRO_0000435352" description="3'3'-cGAMP-specific phosphodiesterase 1">
    <location>
        <begin position="1"/>
        <end position="431"/>
    </location>
</feature>
<feature type="domain" description="HD" evidence="2">
    <location>
        <begin position="39"/>
        <end position="155"/>
    </location>
</feature>
<feature type="domain" description="HD-GYP" evidence="3">
    <location>
        <begin position="231"/>
        <end position="427"/>
    </location>
</feature>
<feature type="active site" description="Proton donor" evidence="1">
    <location>
        <position position="292"/>
    </location>
</feature>
<feature type="binding site" evidence="1">
    <location>
        <position position="288"/>
    </location>
    <ligand>
        <name>a divalent metal cation</name>
        <dbReference type="ChEBI" id="CHEBI:60240"/>
        <label>1</label>
    </ligand>
</feature>
<feature type="binding site" evidence="1">
    <location>
        <position position="289"/>
    </location>
    <ligand>
        <name>a divalent metal cation</name>
        <dbReference type="ChEBI" id="CHEBI:60240"/>
        <label>1</label>
    </ligand>
</feature>
<feature type="binding site" evidence="1">
    <location>
        <position position="289"/>
    </location>
    <ligand>
        <name>a divalent metal cation</name>
        <dbReference type="ChEBI" id="CHEBI:60240"/>
        <label>2</label>
    </ligand>
</feature>
<feature type="binding site" evidence="1">
    <location>
        <position position="317"/>
    </location>
    <ligand>
        <name>a divalent metal cation</name>
        <dbReference type="ChEBI" id="CHEBI:60240"/>
        <label>2</label>
    </ligand>
</feature>
<feature type="binding site" evidence="1">
    <location>
        <position position="341"/>
    </location>
    <ligand>
        <name>a divalent metal cation</name>
        <dbReference type="ChEBI" id="CHEBI:60240"/>
        <label>2</label>
    </ligand>
</feature>
<feature type="binding site" evidence="1">
    <location>
        <position position="342"/>
    </location>
    <ligand>
        <name>a divalent metal cation</name>
        <dbReference type="ChEBI" id="CHEBI:60240"/>
        <label>2</label>
    </ligand>
</feature>
<feature type="binding site" evidence="1">
    <location>
        <position position="370"/>
    </location>
    <ligand>
        <name>a divalent metal cation</name>
        <dbReference type="ChEBI" id="CHEBI:60240"/>
        <label>1</label>
    </ligand>
</feature>
<feature type="mutagenesis site" description="Reduced enzymatic activity." evidence="5">
    <original>HD</original>
    <variation>AA</variation>
    <location>
        <begin position="74"/>
        <end position="75"/>
    </location>
</feature>
<feature type="mutagenesis site" description="Loss of enzymatic activity." evidence="5">
    <original>HD</original>
    <variation>AA</variation>
    <location>
        <begin position="288"/>
        <end position="289"/>
    </location>
</feature>
<feature type="mutagenesis site" description="Reduced enzymatic activity." evidence="5">
    <original>GK</original>
    <variation>AA</variation>
    <location>
        <begin position="291"/>
        <end position="292"/>
    </location>
</feature>
<feature type="mutagenesis site" description="Reduced enzymatic activity." evidence="5">
    <original>HHE</original>
    <variation>AAA</variation>
    <location>
        <begin position="341"/>
        <end position="343"/>
    </location>
</feature>
<feature type="mutagenesis site" description="Reduced enzymatic activity." evidence="5">
    <original>DG</original>
    <variation>AA</variation>
    <location>
        <begin position="346"/>
        <end position="347"/>
    </location>
</feature>
<feature type="mutagenesis site" description="Loss of enzymatic activity." evidence="5">
    <original>Y</original>
    <variation>A</variation>
    <location>
        <position position="350"/>
    </location>
</feature>
<sequence>MRWSEIGCTMKSVNIEWNVNLRQAFFCIARALDSVGVDDINHGHRVGYMAYSCAQAMEWSEEECQLVFALGLIHDCGVAQKRDFYRLLENMQPDNTQQHCVRGNELLSNCPPLAPFADAILYHHTPWDELKNIAISDRNKRFAALIFLADRVDYLKELYPRDEYGNVTQEARNQVCLEIGRLSGSLFERDLVRTMQHLLSKEFIWFSMEHHHIEAMGHNLPSTPFFEQKLGVEEIMSIAMLMANVVDAKSQFTFQHSQKVAELCQHLAKELGLNVEMQKALYLTGLVHDIGKLHTPEEILHKPGKLNESEYLCIQRHSTDSRYTLQMVFGQSVVCEWAGNHHERLDGSGYPRGLQGAAIDLPSRIIAIADVFQALTQARPYRGSMSLNEVMNIMRHEVSCGRLDSQVFDVIVRNSQQYYQLSIAESPTEWA</sequence>
<reference key="1">
    <citation type="journal article" date="2000" name="Nature">
        <title>DNA sequence of both chromosomes of the cholera pathogen Vibrio cholerae.</title>
        <authorList>
            <person name="Heidelberg J.F."/>
            <person name="Eisen J.A."/>
            <person name="Nelson W.C."/>
            <person name="Clayton R.A."/>
            <person name="Gwinn M.L."/>
            <person name="Dodson R.J."/>
            <person name="Haft D.H."/>
            <person name="Hickey E.K."/>
            <person name="Peterson J.D."/>
            <person name="Umayam L.A."/>
            <person name="Gill S.R."/>
            <person name="Nelson K.E."/>
            <person name="Read T.D."/>
            <person name="Tettelin H."/>
            <person name="Richardson D.L."/>
            <person name="Ermolaeva M.D."/>
            <person name="Vamathevan J.J."/>
            <person name="Bass S."/>
            <person name="Qin H."/>
            <person name="Dragoi I."/>
            <person name="Sellers P."/>
            <person name="McDonald L.A."/>
            <person name="Utterback T.R."/>
            <person name="Fleischmann R.D."/>
            <person name="Nierman W.C."/>
            <person name="White O."/>
            <person name="Salzberg S.L."/>
            <person name="Smith H.O."/>
            <person name="Colwell R.R."/>
            <person name="Mekalanos J.J."/>
            <person name="Venter J.C."/>
            <person name="Fraser C.M."/>
        </authorList>
    </citation>
    <scope>NUCLEOTIDE SEQUENCE [LARGE SCALE GENOMIC DNA]</scope>
    <source>
        <strain>ATCC 39315 / El Tor Inaba N16961</strain>
    </source>
</reference>
<reference key="2">
    <citation type="journal article" date="2014" name="BMC Microbiol.">
        <title>A systematic analysis of the in vitro and in vivo functions of the HD-GYP domain proteins of Vibrio cholerae.</title>
        <authorList>
            <person name="McKee R.W."/>
            <person name="Kariisa A."/>
            <person name="Mudrak B."/>
            <person name="Whitaker C."/>
            <person name="Tamayo R."/>
        </authorList>
    </citation>
    <scope>FUNCTION AS A C-DI-GMP PHOSPHODIESTERASE</scope>
    <scope>INDUCTION</scope>
    <source>
        <strain>El Tor C6706</strain>
    </source>
</reference>
<reference key="3">
    <citation type="journal article" date="2015" name="Cell Res.">
        <title>Identification and characterization of phosphodiesterases that specifically degrade 3'3'-cyclic GMP-AMP.</title>
        <authorList>
            <person name="Gao J."/>
            <person name="Tao J."/>
            <person name="Liang W."/>
            <person name="Zhao M."/>
            <person name="Du X."/>
            <person name="Cui S."/>
            <person name="Duan H."/>
            <person name="Kan B."/>
            <person name="Su X."/>
            <person name="Jiang Z."/>
        </authorList>
    </citation>
    <scope>FUNCTION</scope>
    <scope>CATALYTIC ACTIVITY</scope>
    <scope>SUBSTRATE SPECIFICITY</scope>
    <scope>INDUCTION</scope>
    <scope>DISRUPTION PHENOTYPE</scope>
    <scope>MUTAGENESIS OF 74-HIS-ASP-75; 288-HIS-ASP-289; 291-GLY-LYS-292; 341-HIS--GLU-343; 346-ASP-GLY-347 AND TYR-350</scope>
    <source>
        <strain>ATCC 39315 / El Tor Inaba N16961</strain>
    </source>
</reference>
<reference key="4">
    <citation type="journal article" date="2018" name="J. Mol. Biol.">
        <title>Novel Mechanism for Cyclic Dinucleotide Degradation Revealed by Structural Studies of Vibrio Phosphodiesterase V-cGAP3.</title>
        <authorList>
            <person name="Deng M.J."/>
            <person name="Tao J."/>
            <person name="Chao E."/>
            <person name="Ye Z.Y."/>
            <person name="Jiang Z."/>
            <person name="Yu J."/>
            <person name="Su X.D."/>
        </authorList>
    </citation>
    <scope>FUNCTION</scope>
    <scope>CATALYTIC ACTIVITY</scope>
    <scope>COFACTOR</scope>
    <scope>BIOPHYSICOCHEMICAL PROPERTIES</scope>
    <scope>SUBUNIT</scope>
    <source>
        <strain>ATCC 39315 / El Tor Inaba N16961</strain>
    </source>
</reference>
<evidence type="ECO:0000250" key="1">
    <source>
        <dbReference type="UniProtKB" id="Q9KL18"/>
    </source>
</evidence>
<evidence type="ECO:0000255" key="2">
    <source>
        <dbReference type="PROSITE-ProRule" id="PRU01175"/>
    </source>
</evidence>
<evidence type="ECO:0000255" key="3">
    <source>
        <dbReference type="PROSITE-ProRule" id="PRU01176"/>
    </source>
</evidence>
<evidence type="ECO:0000269" key="4">
    <source>
    </source>
</evidence>
<evidence type="ECO:0000269" key="5">
    <source>
    </source>
</evidence>
<evidence type="ECO:0000269" key="6">
    <source>
    </source>
</evidence>
<evidence type="ECO:0000303" key="7">
    <source>
    </source>
</evidence>
<evidence type="ECO:0000305" key="8">
    <source>
    </source>
</evidence>
<evidence type="ECO:0000312" key="9">
    <source>
        <dbReference type="EMBL" id="AAF96581.1"/>
    </source>
</evidence>
<name>CGAP1_VIBCH</name>
<proteinExistence type="evidence at protein level"/>
<keyword id="KW-0106">Calcium</keyword>
<keyword id="KW-0378">Hydrolase</keyword>
<keyword id="KW-0460">Magnesium</keyword>
<keyword id="KW-0479">Metal-binding</keyword>
<keyword id="KW-1185">Reference proteome</keyword>
<dbReference type="EC" id="3.1.4.-" evidence="5 6"/>
<dbReference type="EC" id="3.1.3.-" evidence="5"/>
<dbReference type="EMBL" id="AE003853">
    <property type="protein sequence ID" value="AAF96581.1"/>
    <property type="molecule type" value="Genomic_DNA"/>
</dbReference>
<dbReference type="PIR" id="G82430">
    <property type="entry name" value="G82430"/>
</dbReference>
<dbReference type="RefSeq" id="NP_233069.1">
    <property type="nucleotide sequence ID" value="NC_002506.1"/>
</dbReference>
<dbReference type="SMR" id="Q9KLR1"/>
<dbReference type="STRING" id="243277.VC_A0681"/>
<dbReference type="DNASU" id="2612204"/>
<dbReference type="EnsemblBacteria" id="AAF96581">
    <property type="protein sequence ID" value="AAF96581"/>
    <property type="gene ID" value="VC_A0681"/>
</dbReference>
<dbReference type="KEGG" id="vch:VC_A0681"/>
<dbReference type="PATRIC" id="fig|243277.26.peg.3306"/>
<dbReference type="eggNOG" id="COG2206">
    <property type="taxonomic scope" value="Bacteria"/>
</dbReference>
<dbReference type="HOGENOM" id="CLU_040286_2_0_6"/>
<dbReference type="PHI-base" id="PHI:3227"/>
<dbReference type="Proteomes" id="UP000000584">
    <property type="component" value="Chromosome 2"/>
</dbReference>
<dbReference type="GO" id="GO:0004112">
    <property type="term" value="F:cyclic-nucleotide phosphodiesterase activity"/>
    <property type="evidence" value="ECO:0000314"/>
    <property type="project" value="UniProtKB"/>
</dbReference>
<dbReference type="GO" id="GO:0046872">
    <property type="term" value="F:metal ion binding"/>
    <property type="evidence" value="ECO:0007669"/>
    <property type="project" value="UniProtKB-KW"/>
</dbReference>
<dbReference type="GO" id="GO:0009214">
    <property type="term" value="P:cyclic nucleotide catabolic process"/>
    <property type="evidence" value="ECO:0000314"/>
    <property type="project" value="UniProtKB"/>
</dbReference>
<dbReference type="CDD" id="cd00077">
    <property type="entry name" value="HDc"/>
    <property type="match status" value="2"/>
</dbReference>
<dbReference type="FunFam" id="1.10.3210.10:FF:000018">
    <property type="entry name" value="Two-component system response regulator"/>
    <property type="match status" value="1"/>
</dbReference>
<dbReference type="Gene3D" id="1.10.3210.10">
    <property type="entry name" value="Hypothetical protein af1432"/>
    <property type="match status" value="2"/>
</dbReference>
<dbReference type="InterPro" id="IPR003607">
    <property type="entry name" value="HD/PDEase_dom"/>
</dbReference>
<dbReference type="InterPro" id="IPR006674">
    <property type="entry name" value="HD_domain"/>
</dbReference>
<dbReference type="InterPro" id="IPR037522">
    <property type="entry name" value="HD_GYP_dom"/>
</dbReference>
<dbReference type="InterPro" id="IPR006675">
    <property type="entry name" value="HDIG_dom"/>
</dbReference>
<dbReference type="NCBIfam" id="TIGR00277">
    <property type="entry name" value="HDIG"/>
    <property type="match status" value="1"/>
</dbReference>
<dbReference type="PANTHER" id="PTHR43155:SF2">
    <property type="entry name" value="CYCLIC DI-GMP PHOSPHODIESTERASE PA4108"/>
    <property type="match status" value="1"/>
</dbReference>
<dbReference type="PANTHER" id="PTHR43155">
    <property type="entry name" value="CYCLIC DI-GMP PHOSPHODIESTERASE PA4108-RELATED"/>
    <property type="match status" value="1"/>
</dbReference>
<dbReference type="Pfam" id="PF01966">
    <property type="entry name" value="HD"/>
    <property type="match status" value="1"/>
</dbReference>
<dbReference type="Pfam" id="PF13487">
    <property type="entry name" value="HD_5"/>
    <property type="match status" value="1"/>
</dbReference>
<dbReference type="SMART" id="SM00471">
    <property type="entry name" value="HDc"/>
    <property type="match status" value="2"/>
</dbReference>
<dbReference type="SUPFAM" id="SSF109604">
    <property type="entry name" value="HD-domain/PDEase-like"/>
    <property type="match status" value="2"/>
</dbReference>
<dbReference type="PROSITE" id="PS51831">
    <property type="entry name" value="HD"/>
    <property type="match status" value="1"/>
</dbReference>
<dbReference type="PROSITE" id="PS51832">
    <property type="entry name" value="HD_GYP"/>
    <property type="match status" value="1"/>
</dbReference>
<protein>
    <recommendedName>
        <fullName evidence="7">3'3'-cGAMP-specific phosphodiesterase 1</fullName>
        <shortName evidence="7">3'3'-cGAMP PDE 1</shortName>
        <shortName evidence="7">V-cGAP1</shortName>
        <ecNumber evidence="5 6">3.1.4.-</ecNumber>
    </recommendedName>
    <alternativeName>
        <fullName evidence="8">5'-pApG 5'-nucleotidase</fullName>
        <ecNumber evidence="5">3.1.3.-</ecNumber>
    </alternativeName>
</protein>